<reference key="1">
    <citation type="submission" date="2006-03" db="EMBL/GenBank/DDBJ databases">
        <title>Complete genome sequence of Francisella tularensis LVS (Live Vaccine Strain).</title>
        <authorList>
            <person name="Chain P."/>
            <person name="Larimer F."/>
            <person name="Land M."/>
            <person name="Stilwagen S."/>
            <person name="Larsson P."/>
            <person name="Bearden S."/>
            <person name="Chu M."/>
            <person name="Oyston P."/>
            <person name="Forsman M."/>
            <person name="Andersson S."/>
            <person name="Lindler L."/>
            <person name="Titball R."/>
            <person name="Garcia E."/>
        </authorList>
    </citation>
    <scope>NUCLEOTIDE SEQUENCE [LARGE SCALE GENOMIC DNA]</scope>
    <source>
        <strain>LVS</strain>
    </source>
</reference>
<comment type="function">
    <text evidence="1">Catalyzes the formation of phosphatidylethanolamine (PtdEtn) from phosphatidylserine (PtdSer).</text>
</comment>
<comment type="catalytic activity">
    <reaction evidence="1">
        <text>a 1,2-diacyl-sn-glycero-3-phospho-L-serine + H(+) = a 1,2-diacyl-sn-glycero-3-phosphoethanolamine + CO2</text>
        <dbReference type="Rhea" id="RHEA:20828"/>
        <dbReference type="ChEBI" id="CHEBI:15378"/>
        <dbReference type="ChEBI" id="CHEBI:16526"/>
        <dbReference type="ChEBI" id="CHEBI:57262"/>
        <dbReference type="ChEBI" id="CHEBI:64612"/>
        <dbReference type="EC" id="4.1.1.65"/>
    </reaction>
</comment>
<comment type="cofactor">
    <cofactor evidence="1">
        <name>pyruvate</name>
        <dbReference type="ChEBI" id="CHEBI:15361"/>
    </cofactor>
    <text evidence="1">Binds 1 pyruvoyl group covalently per subunit.</text>
</comment>
<comment type="pathway">
    <text evidence="1">Phospholipid metabolism; phosphatidylethanolamine biosynthesis; phosphatidylethanolamine from CDP-diacylglycerol: step 2/2.</text>
</comment>
<comment type="subunit">
    <text evidence="1">Heterodimer of a large membrane-associated beta subunit and a small pyruvoyl-containing alpha subunit.</text>
</comment>
<comment type="subcellular location">
    <subcellularLocation>
        <location evidence="1">Cell membrane</location>
        <topology evidence="1">Peripheral membrane protein</topology>
    </subcellularLocation>
</comment>
<comment type="PTM">
    <text evidence="1">Is synthesized initially as an inactive proenzyme. Formation of the active enzyme involves a self-maturation process in which the active site pyruvoyl group is generated from an internal serine residue via an autocatalytic post-translational modification. Two non-identical subunits are generated from the proenzyme in this reaction, and the pyruvate is formed at the N-terminus of the alpha chain, which is derived from the carboxyl end of the proenzyme. The autoendoproteolytic cleavage occurs by a canonical serine protease mechanism, in which the side chain hydroxyl group of the serine supplies its oxygen atom to form the C-terminus of the beta chain, while the remainder of the serine residue undergoes an oxidative deamination to produce ammonia and the pyruvoyl prosthetic group on the alpha chain. During this reaction, the Ser that is part of the protease active site of the proenzyme becomes the pyruvoyl prosthetic group, which constitutes an essential element of the active site of the mature decarboxylase.</text>
</comment>
<comment type="similarity">
    <text evidence="1">Belongs to the phosphatidylserine decarboxylase family. PSD-B subfamily. Prokaryotic type I sub-subfamily.</text>
</comment>
<feature type="chain" id="PRO_0000262109" description="Phosphatidylserine decarboxylase beta chain" evidence="1">
    <location>
        <begin position="1"/>
        <end position="247"/>
    </location>
</feature>
<feature type="chain" id="PRO_0000262110" description="Phosphatidylserine decarboxylase alpha chain" evidence="1">
    <location>
        <begin position="248"/>
        <end position="283"/>
    </location>
</feature>
<feature type="active site" description="Charge relay system; for autoendoproteolytic cleavage activity" evidence="1">
    <location>
        <position position="90"/>
    </location>
</feature>
<feature type="active site" description="Charge relay system; for autoendoproteolytic cleavage activity" evidence="1">
    <location>
        <position position="143"/>
    </location>
</feature>
<feature type="active site" description="Charge relay system; for autoendoproteolytic cleavage activity" evidence="1">
    <location>
        <position position="248"/>
    </location>
</feature>
<feature type="active site" description="Schiff-base intermediate with substrate; via pyruvic acid; for decarboxylase activity" evidence="1">
    <location>
        <position position="248"/>
    </location>
</feature>
<feature type="site" description="Cleavage (non-hydrolytic); by autocatalysis" evidence="1">
    <location>
        <begin position="247"/>
        <end position="248"/>
    </location>
</feature>
<feature type="modified residue" description="Pyruvic acid (Ser); by autocatalysis" evidence="1">
    <location>
        <position position="248"/>
    </location>
</feature>
<gene>
    <name evidence="1" type="primary">psd</name>
    <name type="ordered locus">FTL_0450</name>
</gene>
<dbReference type="EC" id="4.1.1.65" evidence="1"/>
<dbReference type="EMBL" id="AM233362">
    <property type="protein sequence ID" value="CAJ78890.1"/>
    <property type="molecule type" value="Genomic_DNA"/>
</dbReference>
<dbReference type="SMR" id="Q2A4Y0"/>
<dbReference type="KEGG" id="ftl:FTL_0450"/>
<dbReference type="UniPathway" id="UPA00558">
    <property type="reaction ID" value="UER00616"/>
</dbReference>
<dbReference type="Proteomes" id="UP000001944">
    <property type="component" value="Chromosome"/>
</dbReference>
<dbReference type="GO" id="GO:0005886">
    <property type="term" value="C:plasma membrane"/>
    <property type="evidence" value="ECO:0007669"/>
    <property type="project" value="UniProtKB-SubCell"/>
</dbReference>
<dbReference type="GO" id="GO:0004609">
    <property type="term" value="F:phosphatidylserine decarboxylase activity"/>
    <property type="evidence" value="ECO:0007669"/>
    <property type="project" value="UniProtKB-UniRule"/>
</dbReference>
<dbReference type="GO" id="GO:0006646">
    <property type="term" value="P:phosphatidylethanolamine biosynthetic process"/>
    <property type="evidence" value="ECO:0007669"/>
    <property type="project" value="UniProtKB-UniRule"/>
</dbReference>
<dbReference type="HAMAP" id="MF_00662">
    <property type="entry name" value="PS_decarb_PSD_B_type1"/>
    <property type="match status" value="1"/>
</dbReference>
<dbReference type="InterPro" id="IPR003817">
    <property type="entry name" value="PS_Dcarbxylase"/>
</dbReference>
<dbReference type="InterPro" id="IPR033177">
    <property type="entry name" value="PSD-B"/>
</dbReference>
<dbReference type="InterPro" id="IPR033178">
    <property type="entry name" value="PSD_type1_pro"/>
</dbReference>
<dbReference type="NCBIfam" id="TIGR00163">
    <property type="entry name" value="PS_decarb"/>
    <property type="match status" value="1"/>
</dbReference>
<dbReference type="PANTHER" id="PTHR10067">
    <property type="entry name" value="PHOSPHATIDYLSERINE DECARBOXYLASE"/>
    <property type="match status" value="1"/>
</dbReference>
<dbReference type="PANTHER" id="PTHR10067:SF6">
    <property type="entry name" value="PHOSPHATIDYLSERINE DECARBOXYLASE PROENZYME, MITOCHONDRIAL"/>
    <property type="match status" value="1"/>
</dbReference>
<dbReference type="Pfam" id="PF02666">
    <property type="entry name" value="PS_Dcarbxylase"/>
    <property type="match status" value="1"/>
</dbReference>
<protein>
    <recommendedName>
        <fullName evidence="1">Phosphatidylserine decarboxylase proenzyme</fullName>
        <ecNumber evidence="1">4.1.1.65</ecNumber>
    </recommendedName>
    <component>
        <recommendedName>
            <fullName evidence="1">Phosphatidylserine decarboxylase alpha chain</fullName>
        </recommendedName>
    </component>
    <component>
        <recommendedName>
            <fullName evidence="1">Phosphatidylserine decarboxylase beta chain</fullName>
        </recommendedName>
    </component>
</protein>
<proteinExistence type="inferred from homology"/>
<name>PSD_FRATH</name>
<evidence type="ECO:0000255" key="1">
    <source>
        <dbReference type="HAMAP-Rule" id="MF_00662"/>
    </source>
</evidence>
<keyword id="KW-1003">Cell membrane</keyword>
<keyword id="KW-0210">Decarboxylase</keyword>
<keyword id="KW-0444">Lipid biosynthesis</keyword>
<keyword id="KW-0443">Lipid metabolism</keyword>
<keyword id="KW-0456">Lyase</keyword>
<keyword id="KW-0472">Membrane</keyword>
<keyword id="KW-0594">Phospholipid biosynthesis</keyword>
<keyword id="KW-1208">Phospholipid metabolism</keyword>
<keyword id="KW-0670">Pyruvate</keyword>
<keyword id="KW-1185">Reference proteome</keyword>
<keyword id="KW-0865">Zymogen</keyword>
<organism>
    <name type="scientific">Francisella tularensis subsp. holarctica (strain LVS)</name>
    <dbReference type="NCBI Taxonomy" id="376619"/>
    <lineage>
        <taxon>Bacteria</taxon>
        <taxon>Pseudomonadati</taxon>
        <taxon>Pseudomonadota</taxon>
        <taxon>Gammaproteobacteria</taxon>
        <taxon>Thiotrichales</taxon>
        <taxon>Francisellaceae</taxon>
        <taxon>Francisella</taxon>
    </lineage>
</organism>
<sequence>MRDNLFIYLQYLLPHTLTSRLVSKLADSENKIIKNHLIKLAIKKFNINLVEAKETDISKYKSFNDFFIRELKDDLRPISNDKNVISSPADGVLSQFGTITDNSLIQAKGKLFSLESLIASSSTTSFTKFATIYLSPKDYHRVHMPIDGKLTKMVYIPGKLFSVNKITTSKVDNLFAKNERLICYFDTIIGEIAVIFVGALLVAGIETVWHGKIAPNYYKDIQTWDYNSAKFNIKFNKGDILGWFNFGSTVIILTSGNNVSFKFEENKNNIKIQVNQDLALITE</sequence>
<accession>Q2A4Y0</accession>